<proteinExistence type="inferred from homology"/>
<sequence length="160" mass="18357">MDLAIIDQTKAGVNQYHQDLVRCVLDYAGKYLELPDNTEMSVTFMNNEEIHQYNKKYRGIDKPTDVISFAIEEDGDDLPVLPDELMDAELAKNIGDILVSVDIINSQAEYLGHSYERELGFLVVHGFLHLNGYDHMLGDAEEKEMFDLQREILDNYGLKR</sequence>
<accession>Q03Y35</accession>
<reference key="1">
    <citation type="journal article" date="2006" name="Proc. Natl. Acad. Sci. U.S.A.">
        <title>Comparative genomics of the lactic acid bacteria.</title>
        <authorList>
            <person name="Makarova K.S."/>
            <person name="Slesarev A."/>
            <person name="Wolf Y.I."/>
            <person name="Sorokin A."/>
            <person name="Mirkin B."/>
            <person name="Koonin E.V."/>
            <person name="Pavlov A."/>
            <person name="Pavlova N."/>
            <person name="Karamychev V."/>
            <person name="Polouchine N."/>
            <person name="Shakhova V."/>
            <person name="Grigoriev I."/>
            <person name="Lou Y."/>
            <person name="Rohksar D."/>
            <person name="Lucas S."/>
            <person name="Huang K."/>
            <person name="Goodstein D.M."/>
            <person name="Hawkins T."/>
            <person name="Plengvidhya V."/>
            <person name="Welker D."/>
            <person name="Hughes J."/>
            <person name="Goh Y."/>
            <person name="Benson A."/>
            <person name="Baldwin K."/>
            <person name="Lee J.-H."/>
            <person name="Diaz-Muniz I."/>
            <person name="Dosti B."/>
            <person name="Smeianov V."/>
            <person name="Wechter W."/>
            <person name="Barabote R."/>
            <person name="Lorca G."/>
            <person name="Altermann E."/>
            <person name="Barrangou R."/>
            <person name="Ganesan B."/>
            <person name="Xie Y."/>
            <person name="Rawsthorne H."/>
            <person name="Tamir D."/>
            <person name="Parker C."/>
            <person name="Breidt F."/>
            <person name="Broadbent J.R."/>
            <person name="Hutkins R."/>
            <person name="O'Sullivan D."/>
            <person name="Steele J."/>
            <person name="Unlu G."/>
            <person name="Saier M.H. Jr."/>
            <person name="Klaenhammer T."/>
            <person name="Richardson P."/>
            <person name="Kozyavkin S."/>
            <person name="Weimer B.C."/>
            <person name="Mills D.A."/>
        </authorList>
    </citation>
    <scope>NUCLEOTIDE SEQUENCE [LARGE SCALE GENOMIC DNA]</scope>
    <source>
        <strain>ATCC 8293 / DSM 20343 / BCRC 11652 / CCM 1803 / JCM 6124 / NCDO 523 / NBRC 100496 / NCIMB 8023 / NCTC 12954 / NRRL B-1118 / 37Y</strain>
    </source>
</reference>
<name>YBEY_LEUMM</name>
<organism>
    <name type="scientific">Leuconostoc mesenteroides subsp. mesenteroides (strain ATCC 8293 / DSM 20343 / BCRC 11652 / CCM 1803 / JCM 6124 / NCDO 523 / NBRC 100496 / NCIMB 8023 / NCTC 12954 / NRRL B-1118 / 37Y)</name>
    <dbReference type="NCBI Taxonomy" id="203120"/>
    <lineage>
        <taxon>Bacteria</taxon>
        <taxon>Bacillati</taxon>
        <taxon>Bacillota</taxon>
        <taxon>Bacilli</taxon>
        <taxon>Lactobacillales</taxon>
        <taxon>Lactobacillaceae</taxon>
        <taxon>Leuconostoc</taxon>
    </lineage>
</organism>
<dbReference type="EC" id="3.1.-.-" evidence="1"/>
<dbReference type="EMBL" id="CP000414">
    <property type="protein sequence ID" value="ABJ61887.1"/>
    <property type="molecule type" value="Genomic_DNA"/>
</dbReference>
<dbReference type="RefSeq" id="WP_011679559.1">
    <property type="nucleotide sequence ID" value="NC_008531.1"/>
</dbReference>
<dbReference type="SMR" id="Q03Y35"/>
<dbReference type="EnsemblBacteria" id="ABJ61887">
    <property type="protein sequence ID" value="ABJ61887"/>
    <property type="gene ID" value="LEUM_0778"/>
</dbReference>
<dbReference type="GeneID" id="29577372"/>
<dbReference type="KEGG" id="lme:LEUM_0778"/>
<dbReference type="eggNOG" id="COG0319">
    <property type="taxonomic scope" value="Bacteria"/>
</dbReference>
<dbReference type="HOGENOM" id="CLU_106710_3_0_9"/>
<dbReference type="Proteomes" id="UP000000362">
    <property type="component" value="Chromosome"/>
</dbReference>
<dbReference type="GO" id="GO:0005737">
    <property type="term" value="C:cytoplasm"/>
    <property type="evidence" value="ECO:0007669"/>
    <property type="project" value="UniProtKB-SubCell"/>
</dbReference>
<dbReference type="GO" id="GO:0004222">
    <property type="term" value="F:metalloendopeptidase activity"/>
    <property type="evidence" value="ECO:0007669"/>
    <property type="project" value="InterPro"/>
</dbReference>
<dbReference type="GO" id="GO:0004521">
    <property type="term" value="F:RNA endonuclease activity"/>
    <property type="evidence" value="ECO:0007669"/>
    <property type="project" value="UniProtKB-UniRule"/>
</dbReference>
<dbReference type="GO" id="GO:0008270">
    <property type="term" value="F:zinc ion binding"/>
    <property type="evidence" value="ECO:0007669"/>
    <property type="project" value="UniProtKB-UniRule"/>
</dbReference>
<dbReference type="GO" id="GO:0006364">
    <property type="term" value="P:rRNA processing"/>
    <property type="evidence" value="ECO:0007669"/>
    <property type="project" value="UniProtKB-UniRule"/>
</dbReference>
<dbReference type="Gene3D" id="3.40.390.30">
    <property type="entry name" value="Metalloproteases ('zincins'), catalytic domain"/>
    <property type="match status" value="1"/>
</dbReference>
<dbReference type="HAMAP" id="MF_00009">
    <property type="entry name" value="Endoribonucl_YbeY"/>
    <property type="match status" value="1"/>
</dbReference>
<dbReference type="InterPro" id="IPR023091">
    <property type="entry name" value="MetalPrtase_cat_dom_sf_prd"/>
</dbReference>
<dbReference type="InterPro" id="IPR002036">
    <property type="entry name" value="YbeY"/>
</dbReference>
<dbReference type="InterPro" id="IPR020549">
    <property type="entry name" value="YbeY_CS"/>
</dbReference>
<dbReference type="NCBIfam" id="TIGR00043">
    <property type="entry name" value="rRNA maturation RNase YbeY"/>
    <property type="match status" value="1"/>
</dbReference>
<dbReference type="PANTHER" id="PTHR46986">
    <property type="entry name" value="ENDORIBONUCLEASE YBEY, CHLOROPLASTIC"/>
    <property type="match status" value="1"/>
</dbReference>
<dbReference type="PANTHER" id="PTHR46986:SF1">
    <property type="entry name" value="ENDORIBONUCLEASE YBEY, CHLOROPLASTIC"/>
    <property type="match status" value="1"/>
</dbReference>
<dbReference type="Pfam" id="PF02130">
    <property type="entry name" value="YbeY"/>
    <property type="match status" value="1"/>
</dbReference>
<dbReference type="SUPFAM" id="SSF55486">
    <property type="entry name" value="Metalloproteases ('zincins'), catalytic domain"/>
    <property type="match status" value="1"/>
</dbReference>
<dbReference type="PROSITE" id="PS01306">
    <property type="entry name" value="UPF0054"/>
    <property type="match status" value="1"/>
</dbReference>
<keyword id="KW-0963">Cytoplasm</keyword>
<keyword id="KW-0255">Endonuclease</keyword>
<keyword id="KW-0378">Hydrolase</keyword>
<keyword id="KW-0479">Metal-binding</keyword>
<keyword id="KW-0540">Nuclease</keyword>
<keyword id="KW-1185">Reference proteome</keyword>
<keyword id="KW-0690">Ribosome biogenesis</keyword>
<keyword id="KW-0698">rRNA processing</keyword>
<keyword id="KW-0862">Zinc</keyword>
<protein>
    <recommendedName>
        <fullName evidence="1">Endoribonuclease YbeY</fullName>
        <ecNumber evidence="1">3.1.-.-</ecNumber>
    </recommendedName>
</protein>
<gene>
    <name evidence="1" type="primary">ybeY</name>
    <name type="ordered locus">LEUM_0778</name>
</gene>
<evidence type="ECO:0000255" key="1">
    <source>
        <dbReference type="HAMAP-Rule" id="MF_00009"/>
    </source>
</evidence>
<feature type="chain" id="PRO_0000284234" description="Endoribonuclease YbeY">
    <location>
        <begin position="1"/>
        <end position="160"/>
    </location>
</feature>
<feature type="binding site" evidence="1">
    <location>
        <position position="125"/>
    </location>
    <ligand>
        <name>Zn(2+)</name>
        <dbReference type="ChEBI" id="CHEBI:29105"/>
        <note>catalytic</note>
    </ligand>
</feature>
<feature type="binding site" evidence="1">
    <location>
        <position position="129"/>
    </location>
    <ligand>
        <name>Zn(2+)</name>
        <dbReference type="ChEBI" id="CHEBI:29105"/>
        <note>catalytic</note>
    </ligand>
</feature>
<feature type="binding site" evidence="1">
    <location>
        <position position="135"/>
    </location>
    <ligand>
        <name>Zn(2+)</name>
        <dbReference type="ChEBI" id="CHEBI:29105"/>
        <note>catalytic</note>
    </ligand>
</feature>
<comment type="function">
    <text evidence="1">Single strand-specific metallo-endoribonuclease involved in late-stage 70S ribosome quality control and in maturation of the 3' terminus of the 16S rRNA.</text>
</comment>
<comment type="cofactor">
    <cofactor evidence="1">
        <name>Zn(2+)</name>
        <dbReference type="ChEBI" id="CHEBI:29105"/>
    </cofactor>
    <text evidence="1">Binds 1 zinc ion.</text>
</comment>
<comment type="subcellular location">
    <subcellularLocation>
        <location evidence="1">Cytoplasm</location>
    </subcellularLocation>
</comment>
<comment type="similarity">
    <text evidence="1">Belongs to the endoribonuclease YbeY family.</text>
</comment>